<reference key="1">
    <citation type="journal article" date="2005" name="Science">
        <title>Extensive DNA inversions in the B. fragilis genome control variable gene expression.</title>
        <authorList>
            <person name="Cerdeno-Tarraga A.-M."/>
            <person name="Patrick S."/>
            <person name="Crossman L.C."/>
            <person name="Blakely G."/>
            <person name="Abratt V."/>
            <person name="Lennard N."/>
            <person name="Poxton I."/>
            <person name="Duerden B."/>
            <person name="Harris B."/>
            <person name="Quail M.A."/>
            <person name="Barron A."/>
            <person name="Clark L."/>
            <person name="Corton C."/>
            <person name="Doggett J."/>
            <person name="Holden M.T.G."/>
            <person name="Larke N."/>
            <person name="Line A."/>
            <person name="Lord A."/>
            <person name="Norbertczak H."/>
            <person name="Ormond D."/>
            <person name="Price C."/>
            <person name="Rabbinowitsch E."/>
            <person name="Woodward J."/>
            <person name="Barrell B.G."/>
            <person name="Parkhill J."/>
        </authorList>
    </citation>
    <scope>NUCLEOTIDE SEQUENCE [LARGE SCALE GENOMIC DNA]</scope>
    <source>
        <strain>ATCC 25285 / DSM 2151 / CCUG 4856 / JCM 11019 / LMG 10263 / NCTC 9343 / Onslow / VPI 2553 / EN-2</strain>
    </source>
</reference>
<protein>
    <recommendedName>
        <fullName evidence="1">Aspartate--ammonia ligase</fullName>
        <ecNumber evidence="1">6.3.1.1</ecNumber>
    </recommendedName>
    <alternativeName>
        <fullName evidence="1">Asparagine synthetase A</fullName>
    </alternativeName>
</protein>
<dbReference type="EC" id="6.3.1.1" evidence="1"/>
<dbReference type="EMBL" id="CR626927">
    <property type="protein sequence ID" value="CAH09288.1"/>
    <property type="molecule type" value="Genomic_DNA"/>
</dbReference>
<dbReference type="RefSeq" id="WP_005790904.1">
    <property type="nucleotide sequence ID" value="NZ_UFTH01000001.1"/>
</dbReference>
<dbReference type="SMR" id="Q5L9E0"/>
<dbReference type="PaxDb" id="272559-BF9343_3507"/>
<dbReference type="GeneID" id="60369667"/>
<dbReference type="KEGG" id="bfs:BF9343_3507"/>
<dbReference type="eggNOG" id="COG2502">
    <property type="taxonomic scope" value="Bacteria"/>
</dbReference>
<dbReference type="HOGENOM" id="CLU_071543_0_0_10"/>
<dbReference type="UniPathway" id="UPA00134">
    <property type="reaction ID" value="UER00194"/>
</dbReference>
<dbReference type="Proteomes" id="UP000006731">
    <property type="component" value="Chromosome"/>
</dbReference>
<dbReference type="GO" id="GO:0005829">
    <property type="term" value="C:cytosol"/>
    <property type="evidence" value="ECO:0007669"/>
    <property type="project" value="TreeGrafter"/>
</dbReference>
<dbReference type="GO" id="GO:0004071">
    <property type="term" value="F:aspartate-ammonia ligase activity"/>
    <property type="evidence" value="ECO:0007669"/>
    <property type="project" value="UniProtKB-UniRule"/>
</dbReference>
<dbReference type="GO" id="GO:0005524">
    <property type="term" value="F:ATP binding"/>
    <property type="evidence" value="ECO:0007669"/>
    <property type="project" value="UniProtKB-UniRule"/>
</dbReference>
<dbReference type="GO" id="GO:0070981">
    <property type="term" value="P:L-asparagine biosynthetic process"/>
    <property type="evidence" value="ECO:0007669"/>
    <property type="project" value="UniProtKB-UniRule"/>
</dbReference>
<dbReference type="CDD" id="cd00645">
    <property type="entry name" value="AsnA"/>
    <property type="match status" value="1"/>
</dbReference>
<dbReference type="Gene3D" id="3.30.930.10">
    <property type="entry name" value="Bira Bifunctional Protein, Domain 2"/>
    <property type="match status" value="1"/>
</dbReference>
<dbReference type="HAMAP" id="MF_00555">
    <property type="entry name" value="AsnA"/>
    <property type="match status" value="1"/>
</dbReference>
<dbReference type="InterPro" id="IPR006195">
    <property type="entry name" value="aa-tRNA-synth_II"/>
</dbReference>
<dbReference type="InterPro" id="IPR045864">
    <property type="entry name" value="aa-tRNA-synth_II/BPL/LPL"/>
</dbReference>
<dbReference type="InterPro" id="IPR004618">
    <property type="entry name" value="AsnA"/>
</dbReference>
<dbReference type="NCBIfam" id="TIGR00669">
    <property type="entry name" value="asnA"/>
    <property type="match status" value="1"/>
</dbReference>
<dbReference type="PANTHER" id="PTHR30073">
    <property type="entry name" value="ASPARTATE--AMMONIA LIGASE"/>
    <property type="match status" value="1"/>
</dbReference>
<dbReference type="PANTHER" id="PTHR30073:SF5">
    <property type="entry name" value="ASPARTATE--AMMONIA LIGASE"/>
    <property type="match status" value="1"/>
</dbReference>
<dbReference type="Pfam" id="PF03590">
    <property type="entry name" value="AsnA"/>
    <property type="match status" value="1"/>
</dbReference>
<dbReference type="PIRSF" id="PIRSF001555">
    <property type="entry name" value="Asp_ammon_ligase"/>
    <property type="match status" value="1"/>
</dbReference>
<dbReference type="SUPFAM" id="SSF55681">
    <property type="entry name" value="Class II aaRS and biotin synthetases"/>
    <property type="match status" value="1"/>
</dbReference>
<dbReference type="PROSITE" id="PS50862">
    <property type="entry name" value="AA_TRNA_LIGASE_II"/>
    <property type="match status" value="1"/>
</dbReference>
<sequence>MSYLIKPQNYKPLLDLKQTELGIKQIKEFFQLNLSSELRLRRVTAPLFVLKGMGINDDLNGIERPVSFPIKDLGDAQAEVVHSLAKWKRLTLADYHIEPGYGIYTDMNAIRSDEELGNLHSLYVDQWDWERVITAEDRNADFLKEIVNRIYAAMIRTEYMVYEMYPQIKPCLPQKLHFIHSEELRQLYPDMEPKCREHAICKKYGAVFIIGIGCKLSDGKKHDGRAPDYDDYTSKGLNDLPGLNGDLLLWDDVLQRSIELSSMGIRVDKEALLRQVKQENQEQRLELYFHKRLLNDTLPLSIGGGIGQSRLCMFYLRKAHIGEIQASIWPEEMRRECTALNIHLI</sequence>
<name>ASNA_BACFN</name>
<proteinExistence type="inferred from homology"/>
<accession>Q5L9E0</accession>
<feature type="chain" id="PRO_1000017936" description="Aspartate--ammonia ligase">
    <location>
        <begin position="1"/>
        <end position="345"/>
    </location>
</feature>
<organism>
    <name type="scientific">Bacteroides fragilis (strain ATCC 25285 / DSM 2151 / CCUG 4856 / JCM 11019 / LMG 10263 / NCTC 9343 / Onslow / VPI 2553 / EN-2)</name>
    <dbReference type="NCBI Taxonomy" id="272559"/>
    <lineage>
        <taxon>Bacteria</taxon>
        <taxon>Pseudomonadati</taxon>
        <taxon>Bacteroidota</taxon>
        <taxon>Bacteroidia</taxon>
        <taxon>Bacteroidales</taxon>
        <taxon>Bacteroidaceae</taxon>
        <taxon>Bacteroides</taxon>
    </lineage>
</organism>
<gene>
    <name evidence="1" type="primary">asnA</name>
    <name type="ordered locus">BF3607</name>
</gene>
<evidence type="ECO:0000255" key="1">
    <source>
        <dbReference type="HAMAP-Rule" id="MF_00555"/>
    </source>
</evidence>
<keyword id="KW-0028">Amino-acid biosynthesis</keyword>
<keyword id="KW-0061">Asparagine biosynthesis</keyword>
<keyword id="KW-0067">ATP-binding</keyword>
<keyword id="KW-0963">Cytoplasm</keyword>
<keyword id="KW-0436">Ligase</keyword>
<keyword id="KW-0547">Nucleotide-binding</keyword>
<comment type="catalytic activity">
    <reaction evidence="1">
        <text>L-aspartate + NH4(+) + ATP = L-asparagine + AMP + diphosphate + H(+)</text>
        <dbReference type="Rhea" id="RHEA:11372"/>
        <dbReference type="ChEBI" id="CHEBI:15378"/>
        <dbReference type="ChEBI" id="CHEBI:28938"/>
        <dbReference type="ChEBI" id="CHEBI:29991"/>
        <dbReference type="ChEBI" id="CHEBI:30616"/>
        <dbReference type="ChEBI" id="CHEBI:33019"/>
        <dbReference type="ChEBI" id="CHEBI:58048"/>
        <dbReference type="ChEBI" id="CHEBI:456215"/>
        <dbReference type="EC" id="6.3.1.1"/>
    </reaction>
</comment>
<comment type="pathway">
    <text evidence="1">Amino-acid biosynthesis; L-asparagine biosynthesis; L-asparagine from L-aspartate (ammonia route): step 1/1.</text>
</comment>
<comment type="subcellular location">
    <subcellularLocation>
        <location evidence="1">Cytoplasm</location>
    </subcellularLocation>
</comment>
<comment type="similarity">
    <text evidence="1">Belongs to the class-II aminoacyl-tRNA synthetase family. AsnA subfamily.</text>
</comment>